<sequence length="194" mass="22686">MYIALEGIDTAGKSTQIELLKNEYKNNILFIKEPGFTKFGTKIREIIFNDDISKKAELFLFLADRAETIEKFVKPNLHKNILTDRSVISGIAYAMEFFDFNMLVNLNKFATDGIFPEFVIILKLDKETLQYRLSQKNHDNIEKRGLDYLINIQDNMIEVCNRLEIPYLLLDASKNIEEINFRIKKVISEYMDID</sequence>
<feature type="chain" id="PRO_1000123582" description="Thymidylate kinase">
    <location>
        <begin position="1"/>
        <end position="194"/>
    </location>
</feature>
<feature type="binding site" evidence="1">
    <location>
        <begin position="7"/>
        <end position="14"/>
    </location>
    <ligand>
        <name>ATP</name>
        <dbReference type="ChEBI" id="CHEBI:30616"/>
    </ligand>
</feature>
<protein>
    <recommendedName>
        <fullName evidence="1">Thymidylate kinase</fullName>
        <ecNumber evidence="1">2.7.4.9</ecNumber>
    </recommendedName>
    <alternativeName>
        <fullName evidence="1">dTMP kinase</fullName>
    </alternativeName>
</protein>
<name>KTHY_NAUPA</name>
<organism>
    <name type="scientific">Nautilia profundicola (strain ATCC BAA-1463 / DSM 18972 / AmH)</name>
    <dbReference type="NCBI Taxonomy" id="598659"/>
    <lineage>
        <taxon>Bacteria</taxon>
        <taxon>Pseudomonadati</taxon>
        <taxon>Campylobacterota</taxon>
        <taxon>Epsilonproteobacteria</taxon>
        <taxon>Nautiliales</taxon>
        <taxon>Nautiliaceae</taxon>
        <taxon>Nautilia</taxon>
    </lineage>
</organism>
<dbReference type="EC" id="2.7.4.9" evidence="1"/>
<dbReference type="EMBL" id="CP001279">
    <property type="protein sequence ID" value="ACM92146.1"/>
    <property type="molecule type" value="Genomic_DNA"/>
</dbReference>
<dbReference type="RefSeq" id="WP_012663518.1">
    <property type="nucleotide sequence ID" value="NC_012115.1"/>
</dbReference>
<dbReference type="SMR" id="B9L9C1"/>
<dbReference type="STRING" id="598659.NAMH_0826"/>
<dbReference type="KEGG" id="nam:NAMH_0826"/>
<dbReference type="eggNOG" id="COG0125">
    <property type="taxonomic scope" value="Bacteria"/>
</dbReference>
<dbReference type="HOGENOM" id="CLU_049131_0_0_7"/>
<dbReference type="OrthoDB" id="9774907at2"/>
<dbReference type="Proteomes" id="UP000000448">
    <property type="component" value="Chromosome"/>
</dbReference>
<dbReference type="GO" id="GO:0005829">
    <property type="term" value="C:cytosol"/>
    <property type="evidence" value="ECO:0007669"/>
    <property type="project" value="TreeGrafter"/>
</dbReference>
<dbReference type="GO" id="GO:0005524">
    <property type="term" value="F:ATP binding"/>
    <property type="evidence" value="ECO:0007669"/>
    <property type="project" value="UniProtKB-UniRule"/>
</dbReference>
<dbReference type="GO" id="GO:0004798">
    <property type="term" value="F:dTMP kinase activity"/>
    <property type="evidence" value="ECO:0007669"/>
    <property type="project" value="UniProtKB-UniRule"/>
</dbReference>
<dbReference type="GO" id="GO:0006233">
    <property type="term" value="P:dTDP biosynthetic process"/>
    <property type="evidence" value="ECO:0007669"/>
    <property type="project" value="InterPro"/>
</dbReference>
<dbReference type="GO" id="GO:0006235">
    <property type="term" value="P:dTTP biosynthetic process"/>
    <property type="evidence" value="ECO:0007669"/>
    <property type="project" value="UniProtKB-UniRule"/>
</dbReference>
<dbReference type="GO" id="GO:0006227">
    <property type="term" value="P:dUDP biosynthetic process"/>
    <property type="evidence" value="ECO:0007669"/>
    <property type="project" value="TreeGrafter"/>
</dbReference>
<dbReference type="CDD" id="cd01672">
    <property type="entry name" value="TMPK"/>
    <property type="match status" value="1"/>
</dbReference>
<dbReference type="Gene3D" id="3.40.50.300">
    <property type="entry name" value="P-loop containing nucleotide triphosphate hydrolases"/>
    <property type="match status" value="1"/>
</dbReference>
<dbReference type="HAMAP" id="MF_00165">
    <property type="entry name" value="Thymidylate_kinase"/>
    <property type="match status" value="1"/>
</dbReference>
<dbReference type="InterPro" id="IPR027417">
    <property type="entry name" value="P-loop_NTPase"/>
</dbReference>
<dbReference type="InterPro" id="IPR039430">
    <property type="entry name" value="Thymidylate_kin-like_dom"/>
</dbReference>
<dbReference type="InterPro" id="IPR018094">
    <property type="entry name" value="Thymidylate_kinase"/>
</dbReference>
<dbReference type="NCBIfam" id="TIGR00041">
    <property type="entry name" value="DTMP_kinase"/>
    <property type="match status" value="1"/>
</dbReference>
<dbReference type="PANTHER" id="PTHR10344">
    <property type="entry name" value="THYMIDYLATE KINASE"/>
    <property type="match status" value="1"/>
</dbReference>
<dbReference type="PANTHER" id="PTHR10344:SF4">
    <property type="entry name" value="UMP-CMP KINASE 2, MITOCHONDRIAL"/>
    <property type="match status" value="1"/>
</dbReference>
<dbReference type="Pfam" id="PF02223">
    <property type="entry name" value="Thymidylate_kin"/>
    <property type="match status" value="1"/>
</dbReference>
<dbReference type="SUPFAM" id="SSF52540">
    <property type="entry name" value="P-loop containing nucleoside triphosphate hydrolases"/>
    <property type="match status" value="1"/>
</dbReference>
<dbReference type="PROSITE" id="PS01331">
    <property type="entry name" value="THYMIDYLATE_KINASE"/>
    <property type="match status" value="1"/>
</dbReference>
<comment type="function">
    <text evidence="1">Phosphorylation of dTMP to form dTDP in both de novo and salvage pathways of dTTP synthesis.</text>
</comment>
<comment type="catalytic activity">
    <reaction evidence="1">
        <text>dTMP + ATP = dTDP + ADP</text>
        <dbReference type="Rhea" id="RHEA:13517"/>
        <dbReference type="ChEBI" id="CHEBI:30616"/>
        <dbReference type="ChEBI" id="CHEBI:58369"/>
        <dbReference type="ChEBI" id="CHEBI:63528"/>
        <dbReference type="ChEBI" id="CHEBI:456216"/>
        <dbReference type="EC" id="2.7.4.9"/>
    </reaction>
</comment>
<comment type="similarity">
    <text evidence="1">Belongs to the thymidylate kinase family.</text>
</comment>
<keyword id="KW-0067">ATP-binding</keyword>
<keyword id="KW-0418">Kinase</keyword>
<keyword id="KW-0545">Nucleotide biosynthesis</keyword>
<keyword id="KW-0547">Nucleotide-binding</keyword>
<keyword id="KW-0808">Transferase</keyword>
<reference key="1">
    <citation type="journal article" date="2009" name="PLoS Genet.">
        <title>Adaptations to submarine hydrothermal environments exemplified by the genome of Nautilia profundicola.</title>
        <authorList>
            <person name="Campbell B.J."/>
            <person name="Smith J.L."/>
            <person name="Hanson T.E."/>
            <person name="Klotz M.G."/>
            <person name="Stein L.Y."/>
            <person name="Lee C.K."/>
            <person name="Wu D."/>
            <person name="Robinson J.M."/>
            <person name="Khouri H.M."/>
            <person name="Eisen J.A."/>
            <person name="Cary S.C."/>
        </authorList>
    </citation>
    <scope>NUCLEOTIDE SEQUENCE [LARGE SCALE GENOMIC DNA]</scope>
    <source>
        <strain>ATCC BAA-1463 / DSM 18972 / AmH</strain>
    </source>
</reference>
<gene>
    <name evidence="1" type="primary">tmk</name>
    <name type="ordered locus">NAMH_0826</name>
</gene>
<accession>B9L9C1</accession>
<evidence type="ECO:0000255" key="1">
    <source>
        <dbReference type="HAMAP-Rule" id="MF_00165"/>
    </source>
</evidence>
<proteinExistence type="inferred from homology"/>